<accession>Q85FI7</accession>
<dbReference type="EMBL" id="AY178864">
    <property type="protein sequence ID" value="AAP29426.2"/>
    <property type="molecule type" value="Genomic_DNA"/>
</dbReference>
<dbReference type="RefSeq" id="NP_848095.2">
    <property type="nucleotide sequence ID" value="NC_004766.1"/>
</dbReference>
<dbReference type="SMR" id="Q85FI7"/>
<dbReference type="GeneID" id="807361"/>
<dbReference type="GO" id="GO:0009507">
    <property type="term" value="C:chloroplast"/>
    <property type="evidence" value="ECO:0007669"/>
    <property type="project" value="UniProtKB-SubCell"/>
</dbReference>
<dbReference type="GO" id="GO:1990904">
    <property type="term" value="C:ribonucleoprotein complex"/>
    <property type="evidence" value="ECO:0007669"/>
    <property type="project" value="UniProtKB-KW"/>
</dbReference>
<dbReference type="GO" id="GO:0005840">
    <property type="term" value="C:ribosome"/>
    <property type="evidence" value="ECO:0007669"/>
    <property type="project" value="UniProtKB-KW"/>
</dbReference>
<dbReference type="GO" id="GO:0019843">
    <property type="term" value="F:rRNA binding"/>
    <property type="evidence" value="ECO:0007669"/>
    <property type="project" value="UniProtKB-UniRule"/>
</dbReference>
<dbReference type="GO" id="GO:0003735">
    <property type="term" value="F:structural constituent of ribosome"/>
    <property type="evidence" value="ECO:0007669"/>
    <property type="project" value="InterPro"/>
</dbReference>
<dbReference type="GO" id="GO:0006412">
    <property type="term" value="P:translation"/>
    <property type="evidence" value="ECO:0007669"/>
    <property type="project" value="UniProtKB-UniRule"/>
</dbReference>
<dbReference type="FunFam" id="3.30.1490.10:FF:000001">
    <property type="entry name" value="30S ribosomal protein S8"/>
    <property type="match status" value="1"/>
</dbReference>
<dbReference type="Gene3D" id="3.30.1370.30">
    <property type="match status" value="1"/>
</dbReference>
<dbReference type="Gene3D" id="3.30.1490.10">
    <property type="match status" value="1"/>
</dbReference>
<dbReference type="HAMAP" id="MF_01302_B">
    <property type="entry name" value="Ribosomal_uS8_B"/>
    <property type="match status" value="1"/>
</dbReference>
<dbReference type="InterPro" id="IPR000630">
    <property type="entry name" value="Ribosomal_uS8"/>
</dbReference>
<dbReference type="InterPro" id="IPR047863">
    <property type="entry name" value="Ribosomal_uS8_CS"/>
</dbReference>
<dbReference type="InterPro" id="IPR035987">
    <property type="entry name" value="Ribosomal_uS8_sf"/>
</dbReference>
<dbReference type="NCBIfam" id="NF001109">
    <property type="entry name" value="PRK00136.1"/>
    <property type="match status" value="1"/>
</dbReference>
<dbReference type="PANTHER" id="PTHR11758">
    <property type="entry name" value="40S RIBOSOMAL PROTEIN S15A"/>
    <property type="match status" value="1"/>
</dbReference>
<dbReference type="Pfam" id="PF00410">
    <property type="entry name" value="Ribosomal_S8"/>
    <property type="match status" value="1"/>
</dbReference>
<dbReference type="SUPFAM" id="SSF56047">
    <property type="entry name" value="Ribosomal protein S8"/>
    <property type="match status" value="1"/>
</dbReference>
<dbReference type="PROSITE" id="PS00053">
    <property type="entry name" value="RIBOSOMAL_S8"/>
    <property type="match status" value="1"/>
</dbReference>
<sequence length="132" mass="14970">MNNDAISTTVTSIRNANTKRKAMTRIPVTKMTRGIVQILLEEGFLKSVTEHTEGGKIFMDVKLRYFGKEKKPYVATIRYISKPGLRIYCDHIRIPKILGGMGIAILSTSYGLITDREARRRKTGGEILCHIW</sequence>
<protein>
    <recommendedName>
        <fullName evidence="3">Small ribosomal subunit protein uS8c</fullName>
    </recommendedName>
    <alternativeName>
        <fullName>30S ribosomal protein S8, chloroplastic</fullName>
    </alternativeName>
</protein>
<proteinExistence type="evidence at transcript level"/>
<feature type="chain" id="PRO_0000126558" description="Small ribosomal subunit protein uS8c">
    <location>
        <begin position="1"/>
        <end position="132"/>
    </location>
</feature>
<organism>
    <name type="scientific">Adiantum capillus-veneris</name>
    <name type="common">Maidenhair fern</name>
    <dbReference type="NCBI Taxonomy" id="13818"/>
    <lineage>
        <taxon>Eukaryota</taxon>
        <taxon>Viridiplantae</taxon>
        <taxon>Streptophyta</taxon>
        <taxon>Embryophyta</taxon>
        <taxon>Tracheophyta</taxon>
        <taxon>Polypodiopsida</taxon>
        <taxon>Polypodiidae</taxon>
        <taxon>Polypodiales</taxon>
        <taxon>Pteridineae</taxon>
        <taxon>Pteridaceae</taxon>
        <taxon>Vittarioideae</taxon>
        <taxon>Adiantum</taxon>
    </lineage>
</organism>
<evidence type="ECO:0000250" key="1"/>
<evidence type="ECO:0000269" key="2">
    <source>
    </source>
</evidence>
<evidence type="ECO:0000305" key="3"/>
<gene>
    <name type="primary">rps8</name>
</gene>
<name>RR8_ADICA</name>
<keyword id="KW-0150">Chloroplast</keyword>
<keyword id="KW-0934">Plastid</keyword>
<keyword id="KW-0687">Ribonucleoprotein</keyword>
<keyword id="KW-0689">Ribosomal protein</keyword>
<keyword id="KW-0691">RNA editing</keyword>
<keyword id="KW-0694">RNA-binding</keyword>
<keyword id="KW-0699">rRNA-binding</keyword>
<reference key="1">
    <citation type="journal article" date="2003" name="DNA Res.">
        <title>Complete nucleotide sequence of the chloroplast genome from a leptosporangiate fern, Adiantum capillus-veneris L.</title>
        <authorList>
            <person name="Wolf P.G."/>
            <person name="Rowe C.A."/>
            <person name="Sinclair R.B."/>
            <person name="Hasebe M."/>
        </authorList>
    </citation>
    <scope>NUCLEOTIDE SEQUENCE [LARGE SCALE GENOMIC DNA]</scope>
</reference>
<reference key="2">
    <citation type="journal article" date="2004" name="Gene">
        <title>High levels of RNA editing in a vascular plant chloroplast genome: analysis of transcripts from the fern Adiantum capillus-veneris.</title>
        <authorList>
            <person name="Wolf P.G."/>
            <person name="Rowe C.A."/>
            <person name="Hasebe M."/>
        </authorList>
    </citation>
    <scope>NUCLEOTIDE SEQUENCE [GENOMIC DNA]</scope>
    <scope>RNA EDITING</scope>
    <source>
        <tissue>Frond</tissue>
    </source>
</reference>
<comment type="function">
    <text evidence="1">One of the primary rRNA binding proteins, it binds directly to 16S rRNA central domain where it helps coordinate assembly of the platform of the 30S subunit.</text>
</comment>
<comment type="subunit">
    <text evidence="1">Part of the 30S ribosomal subunit.</text>
</comment>
<comment type="subcellular location">
    <subcellularLocation>
        <location>Plastid</location>
        <location>Chloroplast</location>
    </subcellularLocation>
</comment>
<comment type="RNA editing">
    <location>
        <position position="1" evidence="2"/>
    </location>
    <location>
        <position position="129" evidence="2"/>
    </location>
    <text>The initiator methionine is created by RNA editing.</text>
</comment>
<comment type="similarity">
    <text evidence="3">Belongs to the universal ribosomal protein uS8 family.</text>
</comment>
<geneLocation type="chloroplast"/>